<keyword id="KW-0066">ATP synthesis</keyword>
<keyword id="KW-1003">Cell membrane</keyword>
<keyword id="KW-0139">CF(1)</keyword>
<keyword id="KW-0375">Hydrogen ion transport</keyword>
<keyword id="KW-0406">Ion transport</keyword>
<keyword id="KW-0472">Membrane</keyword>
<keyword id="KW-0813">Transport</keyword>
<dbReference type="EMBL" id="AP009049">
    <property type="protein sequence ID" value="BAH08303.1"/>
    <property type="molecule type" value="Genomic_DNA"/>
</dbReference>
<dbReference type="RefSeq" id="WP_012104005.1">
    <property type="nucleotide sequence ID" value="NC_011837.1"/>
</dbReference>
<dbReference type="SMR" id="B9DX60"/>
<dbReference type="KEGG" id="ckr:CKR_3252"/>
<dbReference type="HOGENOM" id="CLU_084338_1_3_9"/>
<dbReference type="Proteomes" id="UP000007969">
    <property type="component" value="Chromosome"/>
</dbReference>
<dbReference type="GO" id="GO:0005886">
    <property type="term" value="C:plasma membrane"/>
    <property type="evidence" value="ECO:0007669"/>
    <property type="project" value="UniProtKB-SubCell"/>
</dbReference>
<dbReference type="GO" id="GO:0045259">
    <property type="term" value="C:proton-transporting ATP synthase complex"/>
    <property type="evidence" value="ECO:0007669"/>
    <property type="project" value="UniProtKB-KW"/>
</dbReference>
<dbReference type="GO" id="GO:0005524">
    <property type="term" value="F:ATP binding"/>
    <property type="evidence" value="ECO:0007669"/>
    <property type="project" value="UniProtKB-UniRule"/>
</dbReference>
<dbReference type="GO" id="GO:0046933">
    <property type="term" value="F:proton-transporting ATP synthase activity, rotational mechanism"/>
    <property type="evidence" value="ECO:0007669"/>
    <property type="project" value="UniProtKB-UniRule"/>
</dbReference>
<dbReference type="CDD" id="cd12152">
    <property type="entry name" value="F1-ATPase_delta"/>
    <property type="match status" value="1"/>
</dbReference>
<dbReference type="Gene3D" id="1.20.5.440">
    <property type="entry name" value="ATP synthase delta/epsilon subunit, C-terminal domain"/>
    <property type="match status" value="1"/>
</dbReference>
<dbReference type="Gene3D" id="2.60.15.10">
    <property type="entry name" value="F0F1 ATP synthase delta/epsilon subunit, N-terminal"/>
    <property type="match status" value="1"/>
</dbReference>
<dbReference type="HAMAP" id="MF_00530">
    <property type="entry name" value="ATP_synth_epsil_bac"/>
    <property type="match status" value="1"/>
</dbReference>
<dbReference type="InterPro" id="IPR036794">
    <property type="entry name" value="ATP_F1_dsu/esu_C_sf"/>
</dbReference>
<dbReference type="InterPro" id="IPR001469">
    <property type="entry name" value="ATP_synth_F1_dsu/esu"/>
</dbReference>
<dbReference type="InterPro" id="IPR020546">
    <property type="entry name" value="ATP_synth_F1_dsu/esu_N"/>
</dbReference>
<dbReference type="InterPro" id="IPR020547">
    <property type="entry name" value="ATP_synth_F1_esu_C"/>
</dbReference>
<dbReference type="InterPro" id="IPR036771">
    <property type="entry name" value="ATPsynth_dsu/esu_N"/>
</dbReference>
<dbReference type="NCBIfam" id="TIGR01216">
    <property type="entry name" value="ATP_synt_epsi"/>
    <property type="match status" value="1"/>
</dbReference>
<dbReference type="NCBIfam" id="NF009984">
    <property type="entry name" value="PRK13450.1"/>
    <property type="match status" value="1"/>
</dbReference>
<dbReference type="PANTHER" id="PTHR13822">
    <property type="entry name" value="ATP SYNTHASE DELTA/EPSILON CHAIN"/>
    <property type="match status" value="1"/>
</dbReference>
<dbReference type="PANTHER" id="PTHR13822:SF10">
    <property type="entry name" value="ATP SYNTHASE EPSILON CHAIN, CHLOROPLASTIC"/>
    <property type="match status" value="1"/>
</dbReference>
<dbReference type="Pfam" id="PF00401">
    <property type="entry name" value="ATP-synt_DE"/>
    <property type="match status" value="1"/>
</dbReference>
<dbReference type="Pfam" id="PF02823">
    <property type="entry name" value="ATP-synt_DE_N"/>
    <property type="match status" value="1"/>
</dbReference>
<dbReference type="SUPFAM" id="SSF46604">
    <property type="entry name" value="Epsilon subunit of F1F0-ATP synthase C-terminal domain"/>
    <property type="match status" value="1"/>
</dbReference>
<dbReference type="SUPFAM" id="SSF51344">
    <property type="entry name" value="Epsilon subunit of F1F0-ATP synthase N-terminal domain"/>
    <property type="match status" value="1"/>
</dbReference>
<protein>
    <recommendedName>
        <fullName evidence="1">ATP synthase epsilon chain</fullName>
    </recommendedName>
    <alternativeName>
        <fullName evidence="1">ATP synthase F1 sector epsilon subunit</fullName>
    </alternativeName>
    <alternativeName>
        <fullName evidence="1">F-ATPase epsilon subunit</fullName>
    </alternativeName>
</protein>
<reference key="1">
    <citation type="submission" date="2005-09" db="EMBL/GenBank/DDBJ databases">
        <title>Complete genome sequence of Clostridium kluyveri and comparative genomics of Clostridia species.</title>
        <authorList>
            <person name="Inui M."/>
            <person name="Nonaka H."/>
            <person name="Shinoda Y."/>
            <person name="Ikenaga Y."/>
            <person name="Abe M."/>
            <person name="Naito K."/>
            <person name="Vertes A.A."/>
            <person name="Yukawa H."/>
        </authorList>
    </citation>
    <scope>NUCLEOTIDE SEQUENCE [LARGE SCALE GENOMIC DNA]</scope>
    <source>
        <strain>NBRC 12016</strain>
    </source>
</reference>
<feature type="chain" id="PRO_1000146320" description="ATP synthase epsilon chain">
    <location>
        <begin position="1"/>
        <end position="132"/>
    </location>
</feature>
<comment type="function">
    <text evidence="1">Produces ATP from ADP in the presence of a proton gradient across the membrane.</text>
</comment>
<comment type="subunit">
    <text evidence="1">F-type ATPases have 2 components, CF(1) - the catalytic core - and CF(0) - the membrane proton channel. CF(1) has five subunits: alpha(3), beta(3), gamma(1), delta(1), epsilon(1). CF(0) has three main subunits: a, b and c.</text>
</comment>
<comment type="subcellular location">
    <subcellularLocation>
        <location evidence="1">Cell membrane</location>
        <topology evidence="1">Peripheral membrane protein</topology>
    </subcellularLocation>
</comment>
<comment type="similarity">
    <text evidence="1">Belongs to the ATPase epsilon chain family.</text>
</comment>
<name>ATPE_CLOK1</name>
<gene>
    <name evidence="1" type="primary">atpC</name>
    <name type="ordered locus">CKR_3252</name>
</gene>
<proteinExistence type="inferred from homology"/>
<accession>B9DX60</accession>
<sequence>MAEVLKLTILTPDREFYKGEVLEVITDSIQGNITILPGHMPLITTLKSTDTRIVEKSGKELKAFTSNGILEIKNNELKILCDVCEWPGEIDLKRAEEAKKRAEQRLAHKDGIDVKRAQLALNRALARINLLK</sequence>
<organism>
    <name type="scientific">Clostridium kluyveri (strain NBRC 12016)</name>
    <dbReference type="NCBI Taxonomy" id="583346"/>
    <lineage>
        <taxon>Bacteria</taxon>
        <taxon>Bacillati</taxon>
        <taxon>Bacillota</taxon>
        <taxon>Clostridia</taxon>
        <taxon>Eubacteriales</taxon>
        <taxon>Clostridiaceae</taxon>
        <taxon>Clostridium</taxon>
    </lineage>
</organism>
<evidence type="ECO:0000255" key="1">
    <source>
        <dbReference type="HAMAP-Rule" id="MF_00530"/>
    </source>
</evidence>